<accession>Q9HQB2</accession>
<organism>
    <name type="scientific">Halobacterium salinarum (strain ATCC 700922 / JCM 11081 / NRC-1)</name>
    <name type="common">Halobacterium halobium</name>
    <dbReference type="NCBI Taxonomy" id="64091"/>
    <lineage>
        <taxon>Archaea</taxon>
        <taxon>Methanobacteriati</taxon>
        <taxon>Methanobacteriota</taxon>
        <taxon>Stenosarchaea group</taxon>
        <taxon>Halobacteria</taxon>
        <taxon>Halobacteriales</taxon>
        <taxon>Halobacteriaceae</taxon>
        <taxon>Halobacterium</taxon>
        <taxon>Halobacterium salinarum NRC-34001</taxon>
    </lineage>
</organism>
<reference key="1">
    <citation type="journal article" date="2000" name="Proc. Natl. Acad. Sci. U.S.A.">
        <title>Genome sequence of Halobacterium species NRC-1.</title>
        <authorList>
            <person name="Ng W.V."/>
            <person name="Kennedy S.P."/>
            <person name="Mahairas G.G."/>
            <person name="Berquist B."/>
            <person name="Pan M."/>
            <person name="Shukla H.D."/>
            <person name="Lasky S.R."/>
            <person name="Baliga N.S."/>
            <person name="Thorsson V."/>
            <person name="Sbrogna J."/>
            <person name="Swartzell S."/>
            <person name="Weir D."/>
            <person name="Hall J."/>
            <person name="Dahl T.A."/>
            <person name="Welti R."/>
            <person name="Goo Y.A."/>
            <person name="Leithauser B."/>
            <person name="Keller K."/>
            <person name="Cruz R."/>
            <person name="Danson M.J."/>
            <person name="Hough D.W."/>
            <person name="Maddocks D.G."/>
            <person name="Jablonski P.E."/>
            <person name="Krebs M.P."/>
            <person name="Angevine C.M."/>
            <person name="Dale H."/>
            <person name="Isenbarger T.A."/>
            <person name="Peck R.F."/>
            <person name="Pohlschroder M."/>
            <person name="Spudich J.L."/>
            <person name="Jung K.-H."/>
            <person name="Alam M."/>
            <person name="Freitas T."/>
            <person name="Hou S."/>
            <person name="Daniels C.J."/>
            <person name="Dennis P.P."/>
            <person name="Omer A.D."/>
            <person name="Ebhardt H."/>
            <person name="Lowe T.M."/>
            <person name="Liang P."/>
            <person name="Riley M."/>
            <person name="Hood L."/>
            <person name="DasSarma S."/>
        </authorList>
    </citation>
    <scope>NUCLEOTIDE SEQUENCE [LARGE SCALE GENOMIC DNA]</scope>
    <source>
        <strain>ATCC 700922 / JCM 11081 / NRC-1</strain>
    </source>
</reference>
<protein>
    <recommendedName>
        <fullName evidence="1">5'-nucleotidase SurE</fullName>
        <ecNumber evidence="1">3.1.3.5</ecNumber>
    </recommendedName>
    <alternativeName>
        <fullName evidence="1">Nucleoside 5'-monophosphate phosphohydrolase</fullName>
    </alternativeName>
</protein>
<sequence length="258" mass="26837">MDADEPEILVTNDDGIDAPGIRALADGLDAVGNVTVVAPADNQSATGRAMSQEVAVHDHDLGYAVEGTPADCVVAGLEALGPYPDLVVSGVNEGGNLGMYVLGRSGTVSAAVEAAFFGVPAIAVSMYMREEQFGEPTAVADYEHAVDATTHLAHDAVTDGIFDTADYLNVNAPHPDADATGEMVVTRPSHAYDMTAAQTGDTVTLYDRLWEAMAAGDIHDPDGTDRRAVLDGHVSVSPLTAPHSTEHHDALDGIATEF</sequence>
<feature type="chain" id="PRO_0000111862" description="5'-nucleotidase SurE">
    <location>
        <begin position="1"/>
        <end position="258"/>
    </location>
</feature>
<feature type="region of interest" description="Disordered" evidence="2">
    <location>
        <begin position="237"/>
        <end position="258"/>
    </location>
</feature>
<feature type="binding site" evidence="1">
    <location>
        <position position="13"/>
    </location>
    <ligand>
        <name>a divalent metal cation</name>
        <dbReference type="ChEBI" id="CHEBI:60240"/>
    </ligand>
</feature>
<feature type="binding site" evidence="1">
    <location>
        <position position="14"/>
    </location>
    <ligand>
        <name>a divalent metal cation</name>
        <dbReference type="ChEBI" id="CHEBI:60240"/>
    </ligand>
</feature>
<feature type="binding site" evidence="1">
    <location>
        <position position="44"/>
    </location>
    <ligand>
        <name>a divalent metal cation</name>
        <dbReference type="ChEBI" id="CHEBI:60240"/>
    </ligand>
</feature>
<feature type="binding site" evidence="1">
    <location>
        <position position="92"/>
    </location>
    <ligand>
        <name>a divalent metal cation</name>
        <dbReference type="ChEBI" id="CHEBI:60240"/>
    </ligand>
</feature>
<proteinExistence type="inferred from homology"/>
<comment type="function">
    <text evidence="1">Nucleotidase that shows phosphatase activity on nucleoside 5'-monophosphates.</text>
</comment>
<comment type="catalytic activity">
    <reaction evidence="1">
        <text>a ribonucleoside 5'-phosphate + H2O = a ribonucleoside + phosphate</text>
        <dbReference type="Rhea" id="RHEA:12484"/>
        <dbReference type="ChEBI" id="CHEBI:15377"/>
        <dbReference type="ChEBI" id="CHEBI:18254"/>
        <dbReference type="ChEBI" id="CHEBI:43474"/>
        <dbReference type="ChEBI" id="CHEBI:58043"/>
        <dbReference type="EC" id="3.1.3.5"/>
    </reaction>
</comment>
<comment type="cofactor">
    <cofactor evidence="1">
        <name>a divalent metal cation</name>
        <dbReference type="ChEBI" id="CHEBI:60240"/>
    </cofactor>
    <text evidence="1">Binds 1 divalent metal cation per subunit.</text>
</comment>
<comment type="subcellular location">
    <subcellularLocation>
        <location evidence="1">Cytoplasm</location>
    </subcellularLocation>
</comment>
<comment type="similarity">
    <text evidence="1">Belongs to the SurE nucleotidase family.</text>
</comment>
<name>SURE_HALSA</name>
<gene>
    <name evidence="1" type="primary">surE</name>
    <name type="ordered locus">VNG_1241G</name>
</gene>
<keyword id="KW-0963">Cytoplasm</keyword>
<keyword id="KW-0378">Hydrolase</keyword>
<keyword id="KW-0479">Metal-binding</keyword>
<keyword id="KW-0547">Nucleotide-binding</keyword>
<keyword id="KW-1185">Reference proteome</keyword>
<dbReference type="EC" id="3.1.3.5" evidence="1"/>
<dbReference type="EMBL" id="AE004437">
    <property type="protein sequence ID" value="AAG19603.1"/>
    <property type="molecule type" value="Genomic_DNA"/>
</dbReference>
<dbReference type="PIR" id="G84279">
    <property type="entry name" value="G84279"/>
</dbReference>
<dbReference type="RefSeq" id="WP_010902899.1">
    <property type="nucleotide sequence ID" value="NC_002607.1"/>
</dbReference>
<dbReference type="SMR" id="Q9HQB2"/>
<dbReference type="FunCoup" id="Q9HQB2">
    <property type="interactions" value="22"/>
</dbReference>
<dbReference type="STRING" id="64091.VNG_1241G"/>
<dbReference type="PaxDb" id="64091-VNG_1241G"/>
<dbReference type="GeneID" id="68694003"/>
<dbReference type="KEGG" id="hal:VNG_1241G"/>
<dbReference type="PATRIC" id="fig|64091.14.peg.950"/>
<dbReference type="HOGENOM" id="CLU_045192_1_3_2"/>
<dbReference type="InParanoid" id="Q9HQB2"/>
<dbReference type="OrthoDB" id="26873at2157"/>
<dbReference type="PhylomeDB" id="Q9HQB2"/>
<dbReference type="Proteomes" id="UP000000554">
    <property type="component" value="Chromosome"/>
</dbReference>
<dbReference type="GO" id="GO:0005737">
    <property type="term" value="C:cytoplasm"/>
    <property type="evidence" value="ECO:0007669"/>
    <property type="project" value="UniProtKB-SubCell"/>
</dbReference>
<dbReference type="GO" id="GO:0008253">
    <property type="term" value="F:5'-nucleotidase activity"/>
    <property type="evidence" value="ECO:0007669"/>
    <property type="project" value="UniProtKB-UniRule"/>
</dbReference>
<dbReference type="GO" id="GO:0046872">
    <property type="term" value="F:metal ion binding"/>
    <property type="evidence" value="ECO:0007669"/>
    <property type="project" value="UniProtKB-UniRule"/>
</dbReference>
<dbReference type="GO" id="GO:0000166">
    <property type="term" value="F:nucleotide binding"/>
    <property type="evidence" value="ECO:0007669"/>
    <property type="project" value="UniProtKB-KW"/>
</dbReference>
<dbReference type="Gene3D" id="3.40.1210.10">
    <property type="entry name" value="Survival protein SurE-like phosphatase/nucleotidase"/>
    <property type="match status" value="1"/>
</dbReference>
<dbReference type="HAMAP" id="MF_00060">
    <property type="entry name" value="SurE"/>
    <property type="match status" value="1"/>
</dbReference>
<dbReference type="InterPro" id="IPR030048">
    <property type="entry name" value="SurE"/>
</dbReference>
<dbReference type="InterPro" id="IPR002828">
    <property type="entry name" value="SurE-like_Pase/nucleotidase"/>
</dbReference>
<dbReference type="InterPro" id="IPR036523">
    <property type="entry name" value="SurE-like_sf"/>
</dbReference>
<dbReference type="NCBIfam" id="TIGR00087">
    <property type="entry name" value="surE"/>
    <property type="match status" value="1"/>
</dbReference>
<dbReference type="PANTHER" id="PTHR30457">
    <property type="entry name" value="5'-NUCLEOTIDASE SURE"/>
    <property type="match status" value="1"/>
</dbReference>
<dbReference type="PANTHER" id="PTHR30457:SF0">
    <property type="entry name" value="PHOSPHATASE, PUTATIVE (AFU_ORTHOLOGUE AFUA_4G01070)-RELATED"/>
    <property type="match status" value="1"/>
</dbReference>
<dbReference type="Pfam" id="PF01975">
    <property type="entry name" value="SurE"/>
    <property type="match status" value="1"/>
</dbReference>
<dbReference type="SUPFAM" id="SSF64167">
    <property type="entry name" value="SurE-like"/>
    <property type="match status" value="1"/>
</dbReference>
<evidence type="ECO:0000255" key="1">
    <source>
        <dbReference type="HAMAP-Rule" id="MF_00060"/>
    </source>
</evidence>
<evidence type="ECO:0000256" key="2">
    <source>
        <dbReference type="SAM" id="MobiDB-lite"/>
    </source>
</evidence>